<dbReference type="EC" id="1.1.1.79" evidence="1"/>
<dbReference type="EC" id="1.1.1.81" evidence="1"/>
<dbReference type="EMBL" id="CP000266">
    <property type="protein sequence ID" value="ABF05570.1"/>
    <property type="molecule type" value="Genomic_DNA"/>
</dbReference>
<dbReference type="RefSeq" id="WP_000804995.1">
    <property type="nucleotide sequence ID" value="NC_008258.1"/>
</dbReference>
<dbReference type="SMR" id="Q0SZE5"/>
<dbReference type="KEGG" id="sfv:SFV_3534"/>
<dbReference type="HOGENOM" id="CLU_019796_1_2_6"/>
<dbReference type="Proteomes" id="UP000000659">
    <property type="component" value="Chromosome"/>
</dbReference>
<dbReference type="GO" id="GO:0005829">
    <property type="term" value="C:cytosol"/>
    <property type="evidence" value="ECO:0007669"/>
    <property type="project" value="TreeGrafter"/>
</dbReference>
<dbReference type="GO" id="GO:0005886">
    <property type="term" value="C:plasma membrane"/>
    <property type="evidence" value="ECO:0007669"/>
    <property type="project" value="UniProtKB-UniRule"/>
</dbReference>
<dbReference type="GO" id="GO:0030267">
    <property type="term" value="F:glyoxylate reductase (NADPH) activity"/>
    <property type="evidence" value="ECO:0007669"/>
    <property type="project" value="UniProtKB-UniRule"/>
</dbReference>
<dbReference type="GO" id="GO:0008465">
    <property type="term" value="F:hydroxypyruvate reductase (NADH) activity"/>
    <property type="evidence" value="ECO:0007669"/>
    <property type="project" value="RHEA"/>
</dbReference>
<dbReference type="GO" id="GO:0120509">
    <property type="term" value="F:hydroxypyruvate reductase (NADPH) activity"/>
    <property type="evidence" value="ECO:0007669"/>
    <property type="project" value="RHEA"/>
</dbReference>
<dbReference type="GO" id="GO:0051287">
    <property type="term" value="F:NAD binding"/>
    <property type="evidence" value="ECO:0007669"/>
    <property type="project" value="InterPro"/>
</dbReference>
<dbReference type="CDD" id="cd05301">
    <property type="entry name" value="GDH"/>
    <property type="match status" value="1"/>
</dbReference>
<dbReference type="FunFam" id="3.40.50.720:FF:000026">
    <property type="entry name" value="Glyoxylate/hydroxypyruvate reductase B"/>
    <property type="match status" value="1"/>
</dbReference>
<dbReference type="Gene3D" id="3.40.50.720">
    <property type="entry name" value="NAD(P)-binding Rossmann-like Domain"/>
    <property type="match status" value="2"/>
</dbReference>
<dbReference type="HAMAP" id="MF_01667">
    <property type="entry name" value="2_Hacid_dh_C_GhrB"/>
    <property type="match status" value="1"/>
</dbReference>
<dbReference type="InterPro" id="IPR050223">
    <property type="entry name" value="D-isomer_2-hydroxyacid_DH"/>
</dbReference>
<dbReference type="InterPro" id="IPR006139">
    <property type="entry name" value="D-isomer_2_OHA_DH_cat_dom"/>
</dbReference>
<dbReference type="InterPro" id="IPR029753">
    <property type="entry name" value="D-isomer_DH_CS"/>
</dbReference>
<dbReference type="InterPro" id="IPR006140">
    <property type="entry name" value="D-isomer_DH_NAD-bd"/>
</dbReference>
<dbReference type="InterPro" id="IPR023756">
    <property type="entry name" value="Glyo/OHPyrv_Rdtase_B"/>
</dbReference>
<dbReference type="InterPro" id="IPR036291">
    <property type="entry name" value="NAD(P)-bd_dom_sf"/>
</dbReference>
<dbReference type="NCBIfam" id="NF011938">
    <property type="entry name" value="PRK15409.1"/>
    <property type="match status" value="1"/>
</dbReference>
<dbReference type="PANTHER" id="PTHR10996">
    <property type="entry name" value="2-HYDROXYACID DEHYDROGENASE-RELATED"/>
    <property type="match status" value="1"/>
</dbReference>
<dbReference type="PANTHER" id="PTHR10996:SF283">
    <property type="entry name" value="GLYOXYLATE_HYDROXYPYRUVATE REDUCTASE B"/>
    <property type="match status" value="1"/>
</dbReference>
<dbReference type="Pfam" id="PF00389">
    <property type="entry name" value="2-Hacid_dh"/>
    <property type="match status" value="1"/>
</dbReference>
<dbReference type="Pfam" id="PF02826">
    <property type="entry name" value="2-Hacid_dh_C"/>
    <property type="match status" value="1"/>
</dbReference>
<dbReference type="SUPFAM" id="SSF52283">
    <property type="entry name" value="Formate/glycerate dehydrogenase catalytic domain-like"/>
    <property type="match status" value="1"/>
</dbReference>
<dbReference type="SUPFAM" id="SSF51735">
    <property type="entry name" value="NAD(P)-binding Rossmann-fold domains"/>
    <property type="match status" value="1"/>
</dbReference>
<dbReference type="PROSITE" id="PS00670">
    <property type="entry name" value="D_2_HYDROXYACID_DH_2"/>
    <property type="match status" value="1"/>
</dbReference>
<dbReference type="PROSITE" id="PS00671">
    <property type="entry name" value="D_2_HYDROXYACID_DH_3"/>
    <property type="match status" value="1"/>
</dbReference>
<name>GHRB_SHIF8</name>
<sequence length="324" mass="35337">MKPSVILYKALPDDLLQRLQAHFTVHQVANLSPQTVVQNAAIFAEAEGLLGSNENVDAALLEKMPKLRATSTISVGYDNFDVDALTARKILLMHTPTVLTETVADTLMALVLSTARRVVEVAERVKAGEWTASIGPDWYGTDVHHKTLGIVGMGRIGMALAQRAHFGFNMPILYNARRHHKEAEERFNARYCDLDTLLQESDFVCLILPLTDETHHLFGAEQFAKMKSSAIFINAGRGPVVDENALIAALQKGEIHVAGLDVFEQEPLSVDSPLLSMANVVAVPHIGSATHETRYGMAACAVDNLIDALQGKVEKNCVNPHVAD</sequence>
<gene>
    <name evidence="1" type="primary">ghrB</name>
    <name type="ordered locus">SFV_3534</name>
</gene>
<accession>Q0SZE5</accession>
<keyword id="KW-0963">Cytoplasm</keyword>
<keyword id="KW-0520">NAD</keyword>
<keyword id="KW-0521">NADP</keyword>
<keyword id="KW-0560">Oxidoreductase</keyword>
<protein>
    <recommendedName>
        <fullName evidence="1">Glyoxylate/hydroxypyruvate reductase B</fullName>
        <ecNumber evidence="1">1.1.1.79</ecNumber>
        <ecNumber evidence="1">1.1.1.81</ecNumber>
    </recommendedName>
</protein>
<comment type="function">
    <text evidence="1">Catalyzes the NADPH-dependent reduction of glyoxylate and hydroxypyruvate into glycolate and glycerate, respectively.</text>
</comment>
<comment type="catalytic activity">
    <reaction evidence="1">
        <text>glycolate + NADP(+) = glyoxylate + NADPH + H(+)</text>
        <dbReference type="Rhea" id="RHEA:10992"/>
        <dbReference type="ChEBI" id="CHEBI:15378"/>
        <dbReference type="ChEBI" id="CHEBI:29805"/>
        <dbReference type="ChEBI" id="CHEBI:36655"/>
        <dbReference type="ChEBI" id="CHEBI:57783"/>
        <dbReference type="ChEBI" id="CHEBI:58349"/>
        <dbReference type="EC" id="1.1.1.79"/>
    </reaction>
</comment>
<comment type="catalytic activity">
    <reaction evidence="1">
        <text>(R)-glycerate + NAD(+) = 3-hydroxypyruvate + NADH + H(+)</text>
        <dbReference type="Rhea" id="RHEA:17905"/>
        <dbReference type="ChEBI" id="CHEBI:15378"/>
        <dbReference type="ChEBI" id="CHEBI:16659"/>
        <dbReference type="ChEBI" id="CHEBI:17180"/>
        <dbReference type="ChEBI" id="CHEBI:57540"/>
        <dbReference type="ChEBI" id="CHEBI:57945"/>
        <dbReference type="EC" id="1.1.1.81"/>
    </reaction>
</comment>
<comment type="catalytic activity">
    <reaction evidence="1">
        <text>(R)-glycerate + NADP(+) = 3-hydroxypyruvate + NADPH + H(+)</text>
        <dbReference type="Rhea" id="RHEA:18657"/>
        <dbReference type="ChEBI" id="CHEBI:15378"/>
        <dbReference type="ChEBI" id="CHEBI:16659"/>
        <dbReference type="ChEBI" id="CHEBI:17180"/>
        <dbReference type="ChEBI" id="CHEBI:57783"/>
        <dbReference type="ChEBI" id="CHEBI:58349"/>
        <dbReference type="EC" id="1.1.1.81"/>
    </reaction>
</comment>
<comment type="subunit">
    <text evidence="1">Homodimer.</text>
</comment>
<comment type="subcellular location">
    <subcellularLocation>
        <location evidence="1">Cytoplasm</location>
    </subcellularLocation>
</comment>
<comment type="similarity">
    <text evidence="1">Belongs to the D-isomer specific 2-hydroxyacid dehydrogenase family. GhrB subfamily.</text>
</comment>
<evidence type="ECO:0000255" key="1">
    <source>
        <dbReference type="HAMAP-Rule" id="MF_01667"/>
    </source>
</evidence>
<proteinExistence type="inferred from homology"/>
<feature type="chain" id="PRO_0000348403" description="Glyoxylate/hydroxypyruvate reductase B">
    <location>
        <begin position="1"/>
        <end position="324"/>
    </location>
</feature>
<feature type="active site" evidence="1">
    <location>
        <position position="237"/>
    </location>
</feature>
<feature type="active site" evidence="1">
    <location>
        <position position="266"/>
    </location>
</feature>
<feature type="active site" description="Proton donor" evidence="1">
    <location>
        <position position="285"/>
    </location>
</feature>
<reference key="1">
    <citation type="journal article" date="2006" name="BMC Genomics">
        <title>Complete genome sequence of Shigella flexneri 5b and comparison with Shigella flexneri 2a.</title>
        <authorList>
            <person name="Nie H."/>
            <person name="Yang F."/>
            <person name="Zhang X."/>
            <person name="Yang J."/>
            <person name="Chen L."/>
            <person name="Wang J."/>
            <person name="Xiong Z."/>
            <person name="Peng J."/>
            <person name="Sun L."/>
            <person name="Dong J."/>
            <person name="Xue Y."/>
            <person name="Xu X."/>
            <person name="Chen S."/>
            <person name="Yao Z."/>
            <person name="Shen Y."/>
            <person name="Jin Q."/>
        </authorList>
    </citation>
    <scope>NUCLEOTIDE SEQUENCE [LARGE SCALE GENOMIC DNA]</scope>
    <source>
        <strain>8401</strain>
    </source>
</reference>
<organism>
    <name type="scientific">Shigella flexneri serotype 5b (strain 8401)</name>
    <dbReference type="NCBI Taxonomy" id="373384"/>
    <lineage>
        <taxon>Bacteria</taxon>
        <taxon>Pseudomonadati</taxon>
        <taxon>Pseudomonadota</taxon>
        <taxon>Gammaproteobacteria</taxon>
        <taxon>Enterobacterales</taxon>
        <taxon>Enterobacteriaceae</taxon>
        <taxon>Shigella</taxon>
    </lineage>
</organism>